<accession>B7N0H8</accession>
<feature type="chain" id="PRO_1000146531" description="Large ribosomal subunit protein bL27">
    <location>
        <begin position="1"/>
        <end position="85"/>
    </location>
</feature>
<feature type="region of interest" description="Disordered" evidence="2">
    <location>
        <begin position="1"/>
        <end position="20"/>
    </location>
</feature>
<evidence type="ECO:0000255" key="1">
    <source>
        <dbReference type="HAMAP-Rule" id="MF_00539"/>
    </source>
</evidence>
<evidence type="ECO:0000256" key="2">
    <source>
        <dbReference type="SAM" id="MobiDB-lite"/>
    </source>
</evidence>
<evidence type="ECO:0000305" key="3"/>
<dbReference type="EMBL" id="CU928162">
    <property type="protein sequence ID" value="CAR09846.1"/>
    <property type="molecule type" value="Genomic_DNA"/>
</dbReference>
<dbReference type="RefSeq" id="WP_000940595.1">
    <property type="nucleotide sequence ID" value="NC_011745.1"/>
</dbReference>
<dbReference type="SMR" id="B7N0H8"/>
<dbReference type="GeneID" id="93778796"/>
<dbReference type="KEGG" id="ecq:ECED1_3843"/>
<dbReference type="HOGENOM" id="CLU_095424_4_1_6"/>
<dbReference type="Proteomes" id="UP000000748">
    <property type="component" value="Chromosome"/>
</dbReference>
<dbReference type="GO" id="GO:0022625">
    <property type="term" value="C:cytosolic large ribosomal subunit"/>
    <property type="evidence" value="ECO:0007669"/>
    <property type="project" value="TreeGrafter"/>
</dbReference>
<dbReference type="GO" id="GO:0003735">
    <property type="term" value="F:structural constituent of ribosome"/>
    <property type="evidence" value="ECO:0007669"/>
    <property type="project" value="InterPro"/>
</dbReference>
<dbReference type="GO" id="GO:0006412">
    <property type="term" value="P:translation"/>
    <property type="evidence" value="ECO:0007669"/>
    <property type="project" value="UniProtKB-UniRule"/>
</dbReference>
<dbReference type="FunFam" id="2.40.50.100:FF:000001">
    <property type="entry name" value="50S ribosomal protein L27"/>
    <property type="match status" value="1"/>
</dbReference>
<dbReference type="Gene3D" id="2.40.50.100">
    <property type="match status" value="1"/>
</dbReference>
<dbReference type="HAMAP" id="MF_00539">
    <property type="entry name" value="Ribosomal_bL27"/>
    <property type="match status" value="1"/>
</dbReference>
<dbReference type="InterPro" id="IPR001684">
    <property type="entry name" value="Ribosomal_bL27"/>
</dbReference>
<dbReference type="InterPro" id="IPR018261">
    <property type="entry name" value="Ribosomal_bL27_CS"/>
</dbReference>
<dbReference type="NCBIfam" id="TIGR00062">
    <property type="entry name" value="L27"/>
    <property type="match status" value="1"/>
</dbReference>
<dbReference type="PANTHER" id="PTHR15893:SF0">
    <property type="entry name" value="LARGE RIBOSOMAL SUBUNIT PROTEIN BL27M"/>
    <property type="match status" value="1"/>
</dbReference>
<dbReference type="PANTHER" id="PTHR15893">
    <property type="entry name" value="RIBOSOMAL PROTEIN L27"/>
    <property type="match status" value="1"/>
</dbReference>
<dbReference type="Pfam" id="PF01016">
    <property type="entry name" value="Ribosomal_L27"/>
    <property type="match status" value="1"/>
</dbReference>
<dbReference type="PRINTS" id="PR00063">
    <property type="entry name" value="RIBOSOMALL27"/>
</dbReference>
<dbReference type="SUPFAM" id="SSF110324">
    <property type="entry name" value="Ribosomal L27 protein-like"/>
    <property type="match status" value="1"/>
</dbReference>
<dbReference type="PROSITE" id="PS00831">
    <property type="entry name" value="RIBOSOMAL_L27"/>
    <property type="match status" value="1"/>
</dbReference>
<gene>
    <name evidence="1" type="primary">rpmA</name>
    <name type="ordered locus">ECED1_3843</name>
</gene>
<sequence length="85" mass="9124">MAHKKAGGSTRNGRDSEAKRLGVKRFGGESVLAGSIIVRQRGTKFHAGANVGCGRDHTLFAKADGKVKFEVKGPKNRKFISIEAE</sequence>
<keyword id="KW-0687">Ribonucleoprotein</keyword>
<keyword id="KW-0689">Ribosomal protein</keyword>
<reference key="1">
    <citation type="journal article" date="2009" name="PLoS Genet.">
        <title>Organised genome dynamics in the Escherichia coli species results in highly diverse adaptive paths.</title>
        <authorList>
            <person name="Touchon M."/>
            <person name="Hoede C."/>
            <person name="Tenaillon O."/>
            <person name="Barbe V."/>
            <person name="Baeriswyl S."/>
            <person name="Bidet P."/>
            <person name="Bingen E."/>
            <person name="Bonacorsi S."/>
            <person name="Bouchier C."/>
            <person name="Bouvet O."/>
            <person name="Calteau A."/>
            <person name="Chiapello H."/>
            <person name="Clermont O."/>
            <person name="Cruveiller S."/>
            <person name="Danchin A."/>
            <person name="Diard M."/>
            <person name="Dossat C."/>
            <person name="Karoui M.E."/>
            <person name="Frapy E."/>
            <person name="Garry L."/>
            <person name="Ghigo J.M."/>
            <person name="Gilles A.M."/>
            <person name="Johnson J."/>
            <person name="Le Bouguenec C."/>
            <person name="Lescat M."/>
            <person name="Mangenot S."/>
            <person name="Martinez-Jehanne V."/>
            <person name="Matic I."/>
            <person name="Nassif X."/>
            <person name="Oztas S."/>
            <person name="Petit M.A."/>
            <person name="Pichon C."/>
            <person name="Rouy Z."/>
            <person name="Ruf C.S."/>
            <person name="Schneider D."/>
            <person name="Tourret J."/>
            <person name="Vacherie B."/>
            <person name="Vallenet D."/>
            <person name="Medigue C."/>
            <person name="Rocha E.P.C."/>
            <person name="Denamur E."/>
        </authorList>
    </citation>
    <scope>NUCLEOTIDE SEQUENCE [LARGE SCALE GENOMIC DNA]</scope>
    <source>
        <strain>ED1a</strain>
    </source>
</reference>
<comment type="similarity">
    <text evidence="1">Belongs to the bacterial ribosomal protein bL27 family.</text>
</comment>
<protein>
    <recommendedName>
        <fullName evidence="1">Large ribosomal subunit protein bL27</fullName>
    </recommendedName>
    <alternativeName>
        <fullName evidence="3">50S ribosomal protein L27</fullName>
    </alternativeName>
</protein>
<name>RL27_ECO81</name>
<organism>
    <name type="scientific">Escherichia coli O81 (strain ED1a)</name>
    <dbReference type="NCBI Taxonomy" id="585397"/>
    <lineage>
        <taxon>Bacteria</taxon>
        <taxon>Pseudomonadati</taxon>
        <taxon>Pseudomonadota</taxon>
        <taxon>Gammaproteobacteria</taxon>
        <taxon>Enterobacterales</taxon>
        <taxon>Enterobacteriaceae</taxon>
        <taxon>Escherichia</taxon>
    </lineage>
</organism>
<proteinExistence type="inferred from homology"/>